<proteinExistence type="inferred from homology"/>
<dbReference type="EMBL" id="AE005174">
    <property type="protein sequence ID" value="AAG54757.1"/>
    <property type="molecule type" value="Genomic_DNA"/>
</dbReference>
<dbReference type="EMBL" id="BA000007">
    <property type="protein sequence ID" value="BAB33884.1"/>
    <property type="molecule type" value="Genomic_DNA"/>
</dbReference>
<dbReference type="PIR" id="A85537">
    <property type="entry name" value="A85537"/>
</dbReference>
<dbReference type="PIR" id="E90686">
    <property type="entry name" value="E90686"/>
</dbReference>
<dbReference type="RefSeq" id="NP_308488.1">
    <property type="nucleotide sequence ID" value="NC_002695.1"/>
</dbReference>
<dbReference type="RefSeq" id="WP_001226938.1">
    <property type="nucleotide sequence ID" value="NZ_VOAI01000005.1"/>
</dbReference>
<dbReference type="SMR" id="P58092"/>
<dbReference type="STRING" id="155864.Z0509"/>
<dbReference type="KEGG" id="ece:Z0509"/>
<dbReference type="KEGG" id="ecs:ECs_0461"/>
<dbReference type="PATRIC" id="fig|386585.9.peg.562"/>
<dbReference type="eggNOG" id="COG3609">
    <property type="taxonomic scope" value="Bacteria"/>
</dbReference>
<dbReference type="HOGENOM" id="CLU_144805_2_1_6"/>
<dbReference type="OMA" id="RTECINS"/>
<dbReference type="Proteomes" id="UP000000558">
    <property type="component" value="Chromosome"/>
</dbReference>
<dbReference type="Proteomes" id="UP000002519">
    <property type="component" value="Chromosome"/>
</dbReference>
<dbReference type="GO" id="GO:0006355">
    <property type="term" value="P:regulation of DNA-templated transcription"/>
    <property type="evidence" value="ECO:0007669"/>
    <property type="project" value="InterPro"/>
</dbReference>
<dbReference type="CDD" id="cd22231">
    <property type="entry name" value="RHH_NikR_HicB-like"/>
    <property type="match status" value="1"/>
</dbReference>
<dbReference type="Gene3D" id="6.10.10.120">
    <property type="entry name" value="Antitoxin ParD1-like"/>
    <property type="match status" value="1"/>
</dbReference>
<dbReference type="InterPro" id="IPR022789">
    <property type="entry name" value="ParD"/>
</dbReference>
<dbReference type="InterPro" id="IPR038296">
    <property type="entry name" value="ParD_sf"/>
</dbReference>
<dbReference type="InterPro" id="IPR010985">
    <property type="entry name" value="Ribbon_hlx_hlx"/>
</dbReference>
<dbReference type="NCBIfam" id="TIGR02606">
    <property type="entry name" value="antidote_CC2985"/>
    <property type="match status" value="1"/>
</dbReference>
<dbReference type="PANTHER" id="PTHR36582">
    <property type="entry name" value="ANTITOXIN PARD"/>
    <property type="match status" value="1"/>
</dbReference>
<dbReference type="PANTHER" id="PTHR36582:SF2">
    <property type="entry name" value="ANTITOXIN PARD"/>
    <property type="match status" value="1"/>
</dbReference>
<dbReference type="Pfam" id="PF03693">
    <property type="entry name" value="ParD_antitoxin"/>
    <property type="match status" value="1"/>
</dbReference>
<dbReference type="SUPFAM" id="SSF47598">
    <property type="entry name" value="Ribbon-helix-helix"/>
    <property type="match status" value="1"/>
</dbReference>
<accession>P58092</accession>
<gene>
    <name type="primary">parD</name>
    <name type="ordered locus">Z0509</name>
    <name type="ordered locus">ECs0461</name>
</gene>
<reference key="1">
    <citation type="journal article" date="2001" name="Nature">
        <title>Genome sequence of enterohaemorrhagic Escherichia coli O157:H7.</title>
        <authorList>
            <person name="Perna N.T."/>
            <person name="Plunkett G. III"/>
            <person name="Burland V."/>
            <person name="Mau B."/>
            <person name="Glasner J.D."/>
            <person name="Rose D.J."/>
            <person name="Mayhew G.F."/>
            <person name="Evans P.S."/>
            <person name="Gregor J."/>
            <person name="Kirkpatrick H.A."/>
            <person name="Posfai G."/>
            <person name="Hackett J."/>
            <person name="Klink S."/>
            <person name="Boutin A."/>
            <person name="Shao Y."/>
            <person name="Miller L."/>
            <person name="Grotbeck E.J."/>
            <person name="Davis N.W."/>
            <person name="Lim A."/>
            <person name="Dimalanta E.T."/>
            <person name="Potamousis K."/>
            <person name="Apodaca J."/>
            <person name="Anantharaman T.S."/>
            <person name="Lin J."/>
            <person name="Yen G."/>
            <person name="Schwartz D.C."/>
            <person name="Welch R.A."/>
            <person name="Blattner F.R."/>
        </authorList>
    </citation>
    <scope>NUCLEOTIDE SEQUENCE [LARGE SCALE GENOMIC DNA]</scope>
    <source>
        <strain>O157:H7 / EDL933 / ATCC 700927 / EHEC</strain>
    </source>
</reference>
<reference key="2">
    <citation type="journal article" date="2001" name="DNA Res.">
        <title>Complete genome sequence of enterohemorrhagic Escherichia coli O157:H7 and genomic comparison with a laboratory strain K-12.</title>
        <authorList>
            <person name="Hayashi T."/>
            <person name="Makino K."/>
            <person name="Ohnishi M."/>
            <person name="Kurokawa K."/>
            <person name="Ishii K."/>
            <person name="Yokoyama K."/>
            <person name="Han C.-G."/>
            <person name="Ohtsubo E."/>
            <person name="Nakayama K."/>
            <person name="Murata T."/>
            <person name="Tanaka M."/>
            <person name="Tobe T."/>
            <person name="Iida T."/>
            <person name="Takami H."/>
            <person name="Honda T."/>
            <person name="Sasakawa C."/>
            <person name="Ogasawara N."/>
            <person name="Yasunaga T."/>
            <person name="Kuhara S."/>
            <person name="Shiba T."/>
            <person name="Hattori M."/>
            <person name="Shinagawa H."/>
        </authorList>
    </citation>
    <scope>NUCLEOTIDE SEQUENCE [LARGE SCALE GENOMIC DNA]</scope>
    <source>
        <strain>O157:H7 / Sakai / RIMD 0509952 / EHEC</strain>
    </source>
</reference>
<evidence type="ECO:0000250" key="1"/>
<evidence type="ECO:0000305" key="2"/>
<feature type="chain" id="PRO_0000216352" description="Antitoxin ParD">
    <location>
        <begin position="1"/>
        <end position="80"/>
    </location>
</feature>
<keyword id="KW-1185">Reference proteome</keyword>
<keyword id="KW-1277">Toxin-antitoxin system</keyword>
<name>PARD_ECO57</name>
<protein>
    <recommendedName>
        <fullName>Antitoxin ParD</fullName>
    </recommendedName>
</protein>
<organism>
    <name type="scientific">Escherichia coli O157:H7</name>
    <dbReference type="NCBI Taxonomy" id="83334"/>
    <lineage>
        <taxon>Bacteria</taxon>
        <taxon>Pseudomonadati</taxon>
        <taxon>Pseudomonadota</taxon>
        <taxon>Gammaproteobacteria</taxon>
        <taxon>Enterobacterales</taxon>
        <taxon>Enterobacteriaceae</taxon>
        <taxon>Escherichia</taxon>
    </lineage>
</organism>
<comment type="function">
    <text evidence="1">Antitoxin component of a type II toxin-antitoxin (TA) system. Neutralizes the effect of toxin ParE (By similarity).</text>
</comment>
<comment type="similarity">
    <text evidence="2">Belongs to the ParD antitoxin family.</text>
</comment>
<sequence>MRKITSVSVGEQLDSFITRMVQSGRYGSASEVMRSALRLLEQQESRDEAVRNAVIEGLESGESSMTLRDIAAERKQKHRV</sequence>